<feature type="chain" id="PRO_0000084412" description="von Willebrand factor A domain-containing protein 5A">
    <location>
        <begin position="1"/>
        <end position="793"/>
    </location>
</feature>
<feature type="domain" description="VIT" evidence="3">
    <location>
        <begin position="1"/>
        <end position="131"/>
    </location>
</feature>
<feature type="domain" description="VWFA" evidence="2">
    <location>
        <begin position="281"/>
        <end position="469"/>
    </location>
</feature>
<feature type="modified residue" description="Phosphotyrosine" evidence="5">
    <location>
        <position position="622"/>
    </location>
</feature>
<feature type="sequence conflict" description="In Ref. 2; BAB31913." evidence="4" ref="2">
    <original>R</original>
    <variation>G</variation>
    <location>
        <position position="152"/>
    </location>
</feature>
<feature type="sequence conflict" description="In Ref. 2; BAE23178." evidence="4" ref="2">
    <original>P</original>
    <variation>T</variation>
    <location>
        <position position="172"/>
    </location>
</feature>
<feature type="sequence conflict" description="In Ref. 1; AAQ94870." evidence="4" ref="1">
    <original>T</original>
    <variation>I</variation>
    <location>
        <position position="179"/>
    </location>
</feature>
<feature type="sequence conflict" description="In Ref. 2; BAE20590." evidence="4" ref="2">
    <original>Q</original>
    <variation>R</variation>
    <location>
        <position position="347"/>
    </location>
</feature>
<feature type="sequence conflict" description="In Ref. 3; AAH04727." evidence="4" ref="3">
    <original>S</original>
    <variation>A</variation>
    <location>
        <position position="733"/>
    </location>
</feature>
<accession>Q99KC8</accession>
<accession>Q3TTU2</accession>
<accession>Q3UVU1</accession>
<accession>Q3V3F2</accession>
<accession>Q6UN22</accession>
<accession>Q8BHA8</accession>
<accession>Q9CTV9</accession>
<sequence>MEHHCGLITSNKETVPLKNISVTLSINEFVAAVVATLNYENEEKVPLEATFVFPMDEDSAVYSFEALVDGKKIVAELQDKMKAHSEYEEALSQGHQAYLLEEDDYSRDVFSCNVGNLQPGAKVAVTLRYVQELPLETDGALRYLLPAILNPRYQLSEQSANSCLNIQKPTVPLEDLPYTLNMTATITSQHGIERVQSNCSLSPIQYLTDDKTSAQVSLTEGHKFDRDVELLIYYNEVHSPSVAVEMGMLDMKPDSLMGAPSAMVSFYPDIPEVEASKACGEFVFLMDRSGSMDSPMSTENNSQLRIEAAKETLLLLLKSLPMGCYFNIYGFGSSYEKFFPESVKYTQDTMEDAVKRVKALKANLGGTEILTPLCNIYKASSIPGHPLQLFVFTDGEVSDTFSVIREVKLNSKKHRCFSFGIGQGASTSLIKNIARVSGGTAVFITGKDRMQTKALGSLKFALQCAVDNISLSWDLPPGLSVKMLSPEQLTIFRGQRLIIYAQLTGLMPQVESTGAVCLKHILQGRSLENRVTFSLQPKANDNFTIHRLAAKSLIQTKDFGSQEASKEEKEDVMNISLQSGVLSSFTAFIAINKELNKPVQGPLAHRVIPRPVMAGSSSMRFYSSFSGGFKGPQPRSLRVPAYDLCSAESANLVLKKSACSAIQKKKTNSSTNKSNLKKEHKAFGENAVVQLISLQKANGSWELDEDLTKILGTKSKDIKAANPAKHEDPSAWSTVLAVVWLHANGTDLKCEWELLERKAVAWLHDHAGSSIPMLVQAANSLLKLSVNPAVFGV</sequence>
<gene>
    <name type="primary">Vwa5a</name>
    <name type="synonym">Loh11cr2a</name>
</gene>
<comment type="function">
    <text evidence="1">May play a role in tumorigenesis as a tumor suppressor. Altered expression of this protein and disruption of the molecular pathway it is involved in may contribute directly to or modify tumorigenesis (By similarity).</text>
</comment>
<keyword id="KW-0597">Phosphoprotein</keyword>
<keyword id="KW-1185">Reference proteome</keyword>
<keyword id="KW-0043">Tumor suppressor</keyword>
<organism>
    <name type="scientific">Mus musculus</name>
    <name type="common">Mouse</name>
    <dbReference type="NCBI Taxonomy" id="10090"/>
    <lineage>
        <taxon>Eukaryota</taxon>
        <taxon>Metazoa</taxon>
        <taxon>Chordata</taxon>
        <taxon>Craniata</taxon>
        <taxon>Vertebrata</taxon>
        <taxon>Euteleostomi</taxon>
        <taxon>Mammalia</taxon>
        <taxon>Eutheria</taxon>
        <taxon>Euarchontoglires</taxon>
        <taxon>Glires</taxon>
        <taxon>Rodentia</taxon>
        <taxon>Myomorpha</taxon>
        <taxon>Muroidea</taxon>
        <taxon>Muridae</taxon>
        <taxon>Murinae</taxon>
        <taxon>Mus</taxon>
        <taxon>Mus</taxon>
    </lineage>
</organism>
<reference key="1">
    <citation type="journal article" date="2003" name="Proc. Natl. Acad. Sci. U.S.A.">
        <title>The BCSC-1 locus at chromosome 11q23-q24 is a candidate tumor suppressor gene.</title>
        <authorList>
            <person name="Martin E.S."/>
            <person name="Cesari R."/>
            <person name="Pentimalli F."/>
            <person name="Yoder K."/>
            <person name="Fishel R."/>
            <person name="Himelstein A.L."/>
            <person name="Martin S.E."/>
            <person name="Godwin A.K."/>
            <person name="Negrini M."/>
            <person name="Croce C.M."/>
        </authorList>
    </citation>
    <scope>NUCLEOTIDE SEQUENCE [MRNA]</scope>
</reference>
<reference key="2">
    <citation type="journal article" date="2005" name="Science">
        <title>The transcriptional landscape of the mammalian genome.</title>
        <authorList>
            <person name="Carninci P."/>
            <person name="Kasukawa T."/>
            <person name="Katayama S."/>
            <person name="Gough J."/>
            <person name="Frith M.C."/>
            <person name="Maeda N."/>
            <person name="Oyama R."/>
            <person name="Ravasi T."/>
            <person name="Lenhard B."/>
            <person name="Wells C."/>
            <person name="Kodzius R."/>
            <person name="Shimokawa K."/>
            <person name="Bajic V.B."/>
            <person name="Brenner S.E."/>
            <person name="Batalov S."/>
            <person name="Forrest A.R."/>
            <person name="Zavolan M."/>
            <person name="Davis M.J."/>
            <person name="Wilming L.G."/>
            <person name="Aidinis V."/>
            <person name="Allen J.E."/>
            <person name="Ambesi-Impiombato A."/>
            <person name="Apweiler R."/>
            <person name="Aturaliya R.N."/>
            <person name="Bailey T.L."/>
            <person name="Bansal M."/>
            <person name="Baxter L."/>
            <person name="Beisel K.W."/>
            <person name="Bersano T."/>
            <person name="Bono H."/>
            <person name="Chalk A.M."/>
            <person name="Chiu K.P."/>
            <person name="Choudhary V."/>
            <person name="Christoffels A."/>
            <person name="Clutterbuck D.R."/>
            <person name="Crowe M.L."/>
            <person name="Dalla E."/>
            <person name="Dalrymple B.P."/>
            <person name="de Bono B."/>
            <person name="Della Gatta G."/>
            <person name="di Bernardo D."/>
            <person name="Down T."/>
            <person name="Engstrom P."/>
            <person name="Fagiolini M."/>
            <person name="Faulkner G."/>
            <person name="Fletcher C.F."/>
            <person name="Fukushima T."/>
            <person name="Furuno M."/>
            <person name="Futaki S."/>
            <person name="Gariboldi M."/>
            <person name="Georgii-Hemming P."/>
            <person name="Gingeras T.R."/>
            <person name="Gojobori T."/>
            <person name="Green R.E."/>
            <person name="Gustincich S."/>
            <person name="Harbers M."/>
            <person name="Hayashi Y."/>
            <person name="Hensch T.K."/>
            <person name="Hirokawa N."/>
            <person name="Hill D."/>
            <person name="Huminiecki L."/>
            <person name="Iacono M."/>
            <person name="Ikeo K."/>
            <person name="Iwama A."/>
            <person name="Ishikawa T."/>
            <person name="Jakt M."/>
            <person name="Kanapin A."/>
            <person name="Katoh M."/>
            <person name="Kawasawa Y."/>
            <person name="Kelso J."/>
            <person name="Kitamura H."/>
            <person name="Kitano H."/>
            <person name="Kollias G."/>
            <person name="Krishnan S.P."/>
            <person name="Kruger A."/>
            <person name="Kummerfeld S.K."/>
            <person name="Kurochkin I.V."/>
            <person name="Lareau L.F."/>
            <person name="Lazarevic D."/>
            <person name="Lipovich L."/>
            <person name="Liu J."/>
            <person name="Liuni S."/>
            <person name="McWilliam S."/>
            <person name="Madan Babu M."/>
            <person name="Madera M."/>
            <person name="Marchionni L."/>
            <person name="Matsuda H."/>
            <person name="Matsuzawa S."/>
            <person name="Miki H."/>
            <person name="Mignone F."/>
            <person name="Miyake S."/>
            <person name="Morris K."/>
            <person name="Mottagui-Tabar S."/>
            <person name="Mulder N."/>
            <person name="Nakano N."/>
            <person name="Nakauchi H."/>
            <person name="Ng P."/>
            <person name="Nilsson R."/>
            <person name="Nishiguchi S."/>
            <person name="Nishikawa S."/>
            <person name="Nori F."/>
            <person name="Ohara O."/>
            <person name="Okazaki Y."/>
            <person name="Orlando V."/>
            <person name="Pang K.C."/>
            <person name="Pavan W.J."/>
            <person name="Pavesi G."/>
            <person name="Pesole G."/>
            <person name="Petrovsky N."/>
            <person name="Piazza S."/>
            <person name="Reed J."/>
            <person name="Reid J.F."/>
            <person name="Ring B.Z."/>
            <person name="Ringwald M."/>
            <person name="Rost B."/>
            <person name="Ruan Y."/>
            <person name="Salzberg S.L."/>
            <person name="Sandelin A."/>
            <person name="Schneider C."/>
            <person name="Schoenbach C."/>
            <person name="Sekiguchi K."/>
            <person name="Semple C.A."/>
            <person name="Seno S."/>
            <person name="Sessa L."/>
            <person name="Sheng Y."/>
            <person name="Shibata Y."/>
            <person name="Shimada H."/>
            <person name="Shimada K."/>
            <person name="Silva D."/>
            <person name="Sinclair B."/>
            <person name="Sperling S."/>
            <person name="Stupka E."/>
            <person name="Sugiura K."/>
            <person name="Sultana R."/>
            <person name="Takenaka Y."/>
            <person name="Taki K."/>
            <person name="Tammoja K."/>
            <person name="Tan S.L."/>
            <person name="Tang S."/>
            <person name="Taylor M.S."/>
            <person name="Tegner J."/>
            <person name="Teichmann S.A."/>
            <person name="Ueda H.R."/>
            <person name="van Nimwegen E."/>
            <person name="Verardo R."/>
            <person name="Wei C.L."/>
            <person name="Yagi K."/>
            <person name="Yamanishi H."/>
            <person name="Zabarovsky E."/>
            <person name="Zhu S."/>
            <person name="Zimmer A."/>
            <person name="Hide W."/>
            <person name="Bult C."/>
            <person name="Grimmond S.M."/>
            <person name="Teasdale R.D."/>
            <person name="Liu E.T."/>
            <person name="Brusic V."/>
            <person name="Quackenbush J."/>
            <person name="Wahlestedt C."/>
            <person name="Mattick J.S."/>
            <person name="Hume D.A."/>
            <person name="Kai C."/>
            <person name="Sasaki D."/>
            <person name="Tomaru Y."/>
            <person name="Fukuda S."/>
            <person name="Kanamori-Katayama M."/>
            <person name="Suzuki M."/>
            <person name="Aoki J."/>
            <person name="Arakawa T."/>
            <person name="Iida J."/>
            <person name="Imamura K."/>
            <person name="Itoh M."/>
            <person name="Kato T."/>
            <person name="Kawaji H."/>
            <person name="Kawagashira N."/>
            <person name="Kawashima T."/>
            <person name="Kojima M."/>
            <person name="Kondo S."/>
            <person name="Konno H."/>
            <person name="Nakano K."/>
            <person name="Ninomiya N."/>
            <person name="Nishio T."/>
            <person name="Okada M."/>
            <person name="Plessy C."/>
            <person name="Shibata K."/>
            <person name="Shiraki T."/>
            <person name="Suzuki S."/>
            <person name="Tagami M."/>
            <person name="Waki K."/>
            <person name="Watahiki A."/>
            <person name="Okamura-Oho Y."/>
            <person name="Suzuki H."/>
            <person name="Kawai J."/>
            <person name="Hayashizaki Y."/>
        </authorList>
    </citation>
    <scope>NUCLEOTIDE SEQUENCE [LARGE SCALE MRNA]</scope>
    <source>
        <strain>C57BL/6J</strain>
        <tissue>Diencephalon</tissue>
        <tissue>Eye</tissue>
        <tissue>Head</tissue>
        <tissue>Ovary</tissue>
        <tissue>Pituitary</tissue>
        <tissue>Thymus</tissue>
    </source>
</reference>
<reference key="3">
    <citation type="journal article" date="2004" name="Genome Res.">
        <title>The status, quality, and expansion of the NIH full-length cDNA project: the Mammalian Gene Collection (MGC).</title>
        <authorList>
            <consortium name="The MGC Project Team"/>
        </authorList>
    </citation>
    <scope>NUCLEOTIDE SEQUENCE [LARGE SCALE MRNA]</scope>
    <source>
        <strain>C57BL/6J</strain>
        <strain>FVB/N</strain>
        <tissue>Brain</tissue>
        <tissue>Mammary gland</tissue>
    </source>
</reference>
<reference key="4">
    <citation type="journal article" date="2007" name="J. Immunol.">
        <title>Quantitative time-resolved phosphoproteomic analysis of mast cell signaling.</title>
        <authorList>
            <person name="Cao L."/>
            <person name="Yu K."/>
            <person name="Banh C."/>
            <person name="Nguyen V."/>
            <person name="Ritz A."/>
            <person name="Raphael B.J."/>
            <person name="Kawakami Y."/>
            <person name="Kawakami T."/>
            <person name="Salomon A.R."/>
        </authorList>
    </citation>
    <scope>PHOSPHORYLATION [LARGE SCALE ANALYSIS] AT TYR-622</scope>
    <scope>IDENTIFICATION BY MASS SPECTROMETRY [LARGE SCALE ANALYSIS]</scope>
    <source>
        <tissue>Mast cell</tissue>
    </source>
</reference>
<reference key="5">
    <citation type="journal article" date="2010" name="Cell">
        <title>A tissue-specific atlas of mouse protein phosphorylation and expression.</title>
        <authorList>
            <person name="Huttlin E.L."/>
            <person name="Jedrychowski M.P."/>
            <person name="Elias J.E."/>
            <person name="Goswami T."/>
            <person name="Rad R."/>
            <person name="Beausoleil S.A."/>
            <person name="Villen J."/>
            <person name="Haas W."/>
            <person name="Sowa M.E."/>
            <person name="Gygi S.P."/>
        </authorList>
    </citation>
    <scope>IDENTIFICATION BY MASS SPECTROMETRY [LARGE SCALE ANALYSIS]</scope>
    <source>
        <tissue>Brain</tissue>
        <tissue>Brown adipose tissue</tissue>
        <tissue>Heart</tissue>
        <tissue>Kidney</tissue>
        <tissue>Liver</tissue>
        <tissue>Lung</tissue>
        <tissue>Pancreas</tissue>
        <tissue>Spleen</tissue>
        <tissue>Testis</tissue>
    </source>
</reference>
<protein>
    <recommendedName>
        <fullName>von Willebrand factor A domain-containing protein 5A</fullName>
    </recommendedName>
    <alternativeName>
        <fullName>Loss of heterozygosity 11 chromosomal region 2 gene A protein homolog</fullName>
    </alternativeName>
</protein>
<name>VMA5A_MOUSE</name>
<evidence type="ECO:0000250" key="1"/>
<evidence type="ECO:0000255" key="2">
    <source>
        <dbReference type="PROSITE-ProRule" id="PRU00219"/>
    </source>
</evidence>
<evidence type="ECO:0000255" key="3">
    <source>
        <dbReference type="PROSITE-ProRule" id="PRU00801"/>
    </source>
</evidence>
<evidence type="ECO:0000305" key="4"/>
<evidence type="ECO:0007744" key="5">
    <source>
    </source>
</evidence>
<proteinExistence type="evidence at protein level"/>
<dbReference type="EMBL" id="AY366502">
    <property type="protein sequence ID" value="AAQ94870.1"/>
    <property type="molecule type" value="mRNA"/>
</dbReference>
<dbReference type="EMBL" id="AK019914">
    <property type="protein sequence ID" value="BAB31913.3"/>
    <property type="molecule type" value="mRNA"/>
</dbReference>
<dbReference type="EMBL" id="AK041397">
    <property type="protein sequence ID" value="BAE20590.1"/>
    <property type="molecule type" value="mRNA"/>
</dbReference>
<dbReference type="EMBL" id="AK053665">
    <property type="protein sequence ID" value="BAC35467.1"/>
    <property type="molecule type" value="mRNA"/>
</dbReference>
<dbReference type="EMBL" id="AK054497">
    <property type="protein sequence ID" value="BAC35804.1"/>
    <property type="molecule type" value="mRNA"/>
</dbReference>
<dbReference type="EMBL" id="AK136934">
    <property type="protein sequence ID" value="BAE23178.1"/>
    <property type="molecule type" value="mRNA"/>
</dbReference>
<dbReference type="EMBL" id="AK161193">
    <property type="protein sequence ID" value="BAE36232.1"/>
    <property type="molecule type" value="mRNA"/>
</dbReference>
<dbReference type="EMBL" id="BC004727">
    <property type="protein sequence ID" value="AAH04727.1"/>
    <property type="molecule type" value="mRNA"/>
</dbReference>
<dbReference type="EMBL" id="BC065153">
    <property type="protein sequence ID" value="AAH65153.1"/>
    <property type="molecule type" value="mRNA"/>
</dbReference>
<dbReference type="CCDS" id="CCDS23024.1"/>
<dbReference type="RefSeq" id="NP_001139429.1">
    <property type="nucleotide sequence ID" value="NM_001145957.1"/>
</dbReference>
<dbReference type="RefSeq" id="NP_766355.3">
    <property type="nucleotide sequence ID" value="NM_172767.3"/>
</dbReference>
<dbReference type="SMR" id="Q99KC8"/>
<dbReference type="BioGRID" id="212436">
    <property type="interactions" value="7"/>
</dbReference>
<dbReference type="FunCoup" id="Q99KC8">
    <property type="interactions" value="231"/>
</dbReference>
<dbReference type="STRING" id="10090.ENSMUSP00000001544"/>
<dbReference type="GlyGen" id="Q99KC8">
    <property type="glycosylation" value="2 sites, 1 N-linked glycan (1 site), 1 O-linked glycan (1 site)"/>
</dbReference>
<dbReference type="iPTMnet" id="Q99KC8"/>
<dbReference type="PhosphoSitePlus" id="Q99KC8"/>
<dbReference type="SwissPalm" id="Q99KC8"/>
<dbReference type="jPOST" id="Q99KC8"/>
<dbReference type="PaxDb" id="10090-ENSMUSP00000001544"/>
<dbReference type="PeptideAtlas" id="Q99KC8"/>
<dbReference type="ProteomicsDB" id="297606"/>
<dbReference type="Pumba" id="Q99KC8"/>
<dbReference type="DNASU" id="67776"/>
<dbReference type="Ensembl" id="ENSMUST00000001544.12">
    <property type="protein sequence ID" value="ENSMUSP00000001544.6"/>
    <property type="gene ID" value="ENSMUSG00000023186.15"/>
</dbReference>
<dbReference type="Ensembl" id="ENSMUST00000118144.8">
    <property type="protein sequence ID" value="ENSMUSP00000113596.2"/>
    <property type="gene ID" value="ENSMUSG00000023186.15"/>
</dbReference>
<dbReference type="GeneID" id="67776"/>
<dbReference type="KEGG" id="mmu:67776"/>
<dbReference type="UCSC" id="uc009oxa.2">
    <property type="organism name" value="mouse"/>
</dbReference>
<dbReference type="AGR" id="MGI:1915026"/>
<dbReference type="CTD" id="4013"/>
<dbReference type="MGI" id="MGI:1915026">
    <property type="gene designation" value="Vwa5a"/>
</dbReference>
<dbReference type="VEuPathDB" id="HostDB:ENSMUSG00000023186"/>
<dbReference type="eggNOG" id="ENOG502QRPK">
    <property type="taxonomic scope" value="Eukaryota"/>
</dbReference>
<dbReference type="GeneTree" id="ENSGT00940000159961"/>
<dbReference type="HOGENOM" id="CLU_003826_4_0_1"/>
<dbReference type="InParanoid" id="Q99KC8"/>
<dbReference type="OMA" id="FNVIRFD"/>
<dbReference type="OrthoDB" id="1729737at2759"/>
<dbReference type="PhylomeDB" id="Q99KC8"/>
<dbReference type="TreeFam" id="TF329720"/>
<dbReference type="BioGRID-ORCS" id="67776">
    <property type="hits" value="4 hits in 76 CRISPR screens"/>
</dbReference>
<dbReference type="ChiTaRS" id="Vwa5a">
    <property type="organism name" value="mouse"/>
</dbReference>
<dbReference type="PRO" id="PR:Q99KC8"/>
<dbReference type="Proteomes" id="UP000000589">
    <property type="component" value="Chromosome 9"/>
</dbReference>
<dbReference type="RNAct" id="Q99KC8">
    <property type="molecule type" value="protein"/>
</dbReference>
<dbReference type="Bgee" id="ENSMUSG00000023186">
    <property type="expression patterns" value="Expressed in stroma of bone marrow and 235 other cell types or tissues"/>
</dbReference>
<dbReference type="ExpressionAtlas" id="Q99KC8">
    <property type="expression patterns" value="baseline and differential"/>
</dbReference>
<dbReference type="GO" id="GO:0062023">
    <property type="term" value="C:collagen-containing extracellular matrix"/>
    <property type="evidence" value="ECO:0007005"/>
    <property type="project" value="BHF-UCL"/>
</dbReference>
<dbReference type="CDD" id="cd01461">
    <property type="entry name" value="vWA_interalpha_trypsin_inhibitor"/>
    <property type="match status" value="1"/>
</dbReference>
<dbReference type="FunFam" id="3.40.50.410:FF:000069">
    <property type="entry name" value="von Willebrand factor A domain containing 5A"/>
    <property type="match status" value="1"/>
</dbReference>
<dbReference type="Gene3D" id="3.40.50.410">
    <property type="entry name" value="von Willebrand factor, type A domain"/>
    <property type="match status" value="1"/>
</dbReference>
<dbReference type="InterPro" id="IPR013694">
    <property type="entry name" value="VIT"/>
</dbReference>
<dbReference type="InterPro" id="IPR002035">
    <property type="entry name" value="VWF_A"/>
</dbReference>
<dbReference type="InterPro" id="IPR036465">
    <property type="entry name" value="vWFA_dom_sf"/>
</dbReference>
<dbReference type="PANTHER" id="PTHR45737">
    <property type="entry name" value="VON WILLEBRAND FACTOR A DOMAIN-CONTAINING PROTEIN 5A"/>
    <property type="match status" value="1"/>
</dbReference>
<dbReference type="PANTHER" id="PTHR45737:SF3">
    <property type="entry name" value="VON WILLEBRAND FACTOR A DOMAIN-CONTAINING PROTEIN 5A"/>
    <property type="match status" value="1"/>
</dbReference>
<dbReference type="Pfam" id="PF08487">
    <property type="entry name" value="VIT"/>
    <property type="match status" value="1"/>
</dbReference>
<dbReference type="Pfam" id="PF13768">
    <property type="entry name" value="VWA_3"/>
    <property type="match status" value="1"/>
</dbReference>
<dbReference type="SMART" id="SM00609">
    <property type="entry name" value="VIT"/>
    <property type="match status" value="1"/>
</dbReference>
<dbReference type="SMART" id="SM00327">
    <property type="entry name" value="VWA"/>
    <property type="match status" value="1"/>
</dbReference>
<dbReference type="SUPFAM" id="SSF53300">
    <property type="entry name" value="vWA-like"/>
    <property type="match status" value="1"/>
</dbReference>
<dbReference type="PROSITE" id="PS51468">
    <property type="entry name" value="VIT"/>
    <property type="match status" value="1"/>
</dbReference>
<dbReference type="PROSITE" id="PS50234">
    <property type="entry name" value="VWFA"/>
    <property type="match status" value="1"/>
</dbReference>